<name>PFKA_BACCQ</name>
<organism>
    <name type="scientific">Bacillus cereus (strain Q1)</name>
    <dbReference type="NCBI Taxonomy" id="361100"/>
    <lineage>
        <taxon>Bacteria</taxon>
        <taxon>Bacillati</taxon>
        <taxon>Bacillota</taxon>
        <taxon>Bacilli</taxon>
        <taxon>Bacillales</taxon>
        <taxon>Bacillaceae</taxon>
        <taxon>Bacillus</taxon>
        <taxon>Bacillus cereus group</taxon>
    </lineage>
</organism>
<protein>
    <recommendedName>
        <fullName evidence="1">ATP-dependent 6-phosphofructokinase</fullName>
        <shortName evidence="1">ATP-PFK</shortName>
        <shortName evidence="1">Phosphofructokinase</shortName>
        <ecNumber evidence="1">2.7.1.11</ecNumber>
    </recommendedName>
    <alternativeName>
        <fullName evidence="1">Phosphohexokinase</fullName>
    </alternativeName>
</protein>
<reference key="1">
    <citation type="journal article" date="2009" name="J. Bacteriol.">
        <title>Complete genome sequence of the extremophilic Bacillus cereus strain Q1 with industrial applications.</title>
        <authorList>
            <person name="Xiong Z."/>
            <person name="Jiang Y."/>
            <person name="Qi D."/>
            <person name="Lu H."/>
            <person name="Yang F."/>
            <person name="Yang J."/>
            <person name="Chen L."/>
            <person name="Sun L."/>
            <person name="Xu X."/>
            <person name="Xue Y."/>
            <person name="Zhu Y."/>
            <person name="Jin Q."/>
        </authorList>
    </citation>
    <scope>NUCLEOTIDE SEQUENCE [LARGE SCALE GENOMIC DNA]</scope>
    <source>
        <strain>Q1</strain>
    </source>
</reference>
<feature type="chain" id="PRO_1000192363" description="ATP-dependent 6-phosphofructokinase">
    <location>
        <begin position="1"/>
        <end position="319"/>
    </location>
</feature>
<feature type="active site" description="Proton acceptor" evidence="1">
    <location>
        <position position="127"/>
    </location>
</feature>
<feature type="binding site" evidence="1">
    <location>
        <position position="11"/>
    </location>
    <ligand>
        <name>ATP</name>
        <dbReference type="ChEBI" id="CHEBI:30616"/>
    </ligand>
</feature>
<feature type="binding site" evidence="1">
    <location>
        <begin position="21"/>
        <end position="25"/>
    </location>
    <ligand>
        <name>ADP</name>
        <dbReference type="ChEBI" id="CHEBI:456216"/>
        <note>allosteric activator; ligand shared between dimeric partners</note>
    </ligand>
</feature>
<feature type="binding site" evidence="1">
    <location>
        <begin position="72"/>
        <end position="73"/>
    </location>
    <ligand>
        <name>ATP</name>
        <dbReference type="ChEBI" id="CHEBI:30616"/>
    </ligand>
</feature>
<feature type="binding site" evidence="1">
    <location>
        <begin position="102"/>
        <end position="105"/>
    </location>
    <ligand>
        <name>ATP</name>
        <dbReference type="ChEBI" id="CHEBI:30616"/>
    </ligand>
</feature>
<feature type="binding site" evidence="1">
    <location>
        <position position="103"/>
    </location>
    <ligand>
        <name>Mg(2+)</name>
        <dbReference type="ChEBI" id="CHEBI:18420"/>
        <note>catalytic</note>
    </ligand>
</feature>
<feature type="binding site" description="in other chain" evidence="1">
    <location>
        <begin position="125"/>
        <end position="127"/>
    </location>
    <ligand>
        <name>substrate</name>
        <note>ligand shared between dimeric partners</note>
    </ligand>
</feature>
<feature type="binding site" description="in other chain" evidence="1">
    <location>
        <position position="154"/>
    </location>
    <ligand>
        <name>ADP</name>
        <dbReference type="ChEBI" id="CHEBI:456216"/>
        <note>allosteric activator; ligand shared between dimeric partners</note>
    </ligand>
</feature>
<feature type="binding site" evidence="1">
    <location>
        <position position="162"/>
    </location>
    <ligand>
        <name>substrate</name>
        <note>ligand shared between dimeric partners</note>
    </ligand>
</feature>
<feature type="binding site" description="in other chain" evidence="1">
    <location>
        <begin position="169"/>
        <end position="171"/>
    </location>
    <ligand>
        <name>substrate</name>
        <note>ligand shared between dimeric partners</note>
    </ligand>
</feature>
<feature type="binding site" description="in other chain" evidence="1">
    <location>
        <begin position="185"/>
        <end position="187"/>
    </location>
    <ligand>
        <name>ADP</name>
        <dbReference type="ChEBI" id="CHEBI:456216"/>
        <note>allosteric activator; ligand shared between dimeric partners</note>
    </ligand>
</feature>
<feature type="binding site" description="in other chain" evidence="1">
    <location>
        <position position="211"/>
    </location>
    <ligand>
        <name>ADP</name>
        <dbReference type="ChEBI" id="CHEBI:456216"/>
        <note>allosteric activator; ligand shared between dimeric partners</note>
    </ligand>
</feature>
<feature type="binding site" description="in other chain" evidence="1">
    <location>
        <begin position="213"/>
        <end position="215"/>
    </location>
    <ligand>
        <name>ADP</name>
        <dbReference type="ChEBI" id="CHEBI:456216"/>
        <note>allosteric activator; ligand shared between dimeric partners</note>
    </ligand>
</feature>
<feature type="binding site" description="in other chain" evidence="1">
    <location>
        <position position="222"/>
    </location>
    <ligand>
        <name>substrate</name>
        <note>ligand shared between dimeric partners</note>
    </ligand>
</feature>
<feature type="binding site" evidence="1">
    <location>
        <position position="243"/>
    </location>
    <ligand>
        <name>substrate</name>
        <note>ligand shared between dimeric partners</note>
    </ligand>
</feature>
<feature type="binding site" description="in other chain" evidence="1">
    <location>
        <begin position="249"/>
        <end position="252"/>
    </location>
    <ligand>
        <name>substrate</name>
        <note>ligand shared between dimeric partners</note>
    </ligand>
</feature>
<dbReference type="EC" id="2.7.1.11" evidence="1"/>
<dbReference type="EMBL" id="CP000227">
    <property type="protein sequence ID" value="ACM14829.1"/>
    <property type="molecule type" value="Genomic_DNA"/>
</dbReference>
<dbReference type="SMR" id="B9J099"/>
<dbReference type="KEGG" id="bcq:BCQ_4403"/>
<dbReference type="HOGENOM" id="CLU_020655_0_1_9"/>
<dbReference type="UniPathway" id="UPA00109">
    <property type="reaction ID" value="UER00182"/>
</dbReference>
<dbReference type="Proteomes" id="UP000000441">
    <property type="component" value="Chromosome"/>
</dbReference>
<dbReference type="GO" id="GO:0005945">
    <property type="term" value="C:6-phosphofructokinase complex"/>
    <property type="evidence" value="ECO:0007669"/>
    <property type="project" value="TreeGrafter"/>
</dbReference>
<dbReference type="GO" id="GO:0003872">
    <property type="term" value="F:6-phosphofructokinase activity"/>
    <property type="evidence" value="ECO:0007669"/>
    <property type="project" value="UniProtKB-UniRule"/>
</dbReference>
<dbReference type="GO" id="GO:0016208">
    <property type="term" value="F:AMP binding"/>
    <property type="evidence" value="ECO:0007669"/>
    <property type="project" value="TreeGrafter"/>
</dbReference>
<dbReference type="GO" id="GO:0005524">
    <property type="term" value="F:ATP binding"/>
    <property type="evidence" value="ECO:0007669"/>
    <property type="project" value="UniProtKB-KW"/>
</dbReference>
<dbReference type="GO" id="GO:0070095">
    <property type="term" value="F:fructose-6-phosphate binding"/>
    <property type="evidence" value="ECO:0007669"/>
    <property type="project" value="TreeGrafter"/>
</dbReference>
<dbReference type="GO" id="GO:0042802">
    <property type="term" value="F:identical protein binding"/>
    <property type="evidence" value="ECO:0007669"/>
    <property type="project" value="TreeGrafter"/>
</dbReference>
<dbReference type="GO" id="GO:0046872">
    <property type="term" value="F:metal ion binding"/>
    <property type="evidence" value="ECO:0007669"/>
    <property type="project" value="UniProtKB-KW"/>
</dbReference>
<dbReference type="GO" id="GO:0048029">
    <property type="term" value="F:monosaccharide binding"/>
    <property type="evidence" value="ECO:0007669"/>
    <property type="project" value="TreeGrafter"/>
</dbReference>
<dbReference type="GO" id="GO:0061621">
    <property type="term" value="P:canonical glycolysis"/>
    <property type="evidence" value="ECO:0007669"/>
    <property type="project" value="TreeGrafter"/>
</dbReference>
<dbReference type="GO" id="GO:0030388">
    <property type="term" value="P:fructose 1,6-bisphosphate metabolic process"/>
    <property type="evidence" value="ECO:0007669"/>
    <property type="project" value="TreeGrafter"/>
</dbReference>
<dbReference type="GO" id="GO:0006002">
    <property type="term" value="P:fructose 6-phosphate metabolic process"/>
    <property type="evidence" value="ECO:0007669"/>
    <property type="project" value="InterPro"/>
</dbReference>
<dbReference type="CDD" id="cd00763">
    <property type="entry name" value="Bacterial_PFK"/>
    <property type="match status" value="1"/>
</dbReference>
<dbReference type="FunFam" id="3.40.50.450:FF:000001">
    <property type="entry name" value="ATP-dependent 6-phosphofructokinase"/>
    <property type="match status" value="1"/>
</dbReference>
<dbReference type="FunFam" id="3.40.50.460:FF:000002">
    <property type="entry name" value="ATP-dependent 6-phosphofructokinase"/>
    <property type="match status" value="1"/>
</dbReference>
<dbReference type="Gene3D" id="3.40.50.450">
    <property type="match status" value="1"/>
</dbReference>
<dbReference type="Gene3D" id="3.40.50.460">
    <property type="entry name" value="Phosphofructokinase domain"/>
    <property type="match status" value="1"/>
</dbReference>
<dbReference type="HAMAP" id="MF_00339">
    <property type="entry name" value="Phosphofructokinase_I_B1"/>
    <property type="match status" value="1"/>
</dbReference>
<dbReference type="InterPro" id="IPR022953">
    <property type="entry name" value="ATP_PFK"/>
</dbReference>
<dbReference type="InterPro" id="IPR012003">
    <property type="entry name" value="ATP_PFK_prok-type"/>
</dbReference>
<dbReference type="InterPro" id="IPR012828">
    <property type="entry name" value="PFKA_ATP_prok"/>
</dbReference>
<dbReference type="InterPro" id="IPR015912">
    <property type="entry name" value="Phosphofructokinase_CS"/>
</dbReference>
<dbReference type="InterPro" id="IPR000023">
    <property type="entry name" value="Phosphofructokinase_dom"/>
</dbReference>
<dbReference type="InterPro" id="IPR035966">
    <property type="entry name" value="PKF_sf"/>
</dbReference>
<dbReference type="NCBIfam" id="TIGR02482">
    <property type="entry name" value="PFKA_ATP"/>
    <property type="match status" value="1"/>
</dbReference>
<dbReference type="NCBIfam" id="NF002872">
    <property type="entry name" value="PRK03202.1"/>
    <property type="match status" value="1"/>
</dbReference>
<dbReference type="PANTHER" id="PTHR13697:SF4">
    <property type="entry name" value="ATP-DEPENDENT 6-PHOSPHOFRUCTOKINASE"/>
    <property type="match status" value="1"/>
</dbReference>
<dbReference type="PANTHER" id="PTHR13697">
    <property type="entry name" value="PHOSPHOFRUCTOKINASE"/>
    <property type="match status" value="1"/>
</dbReference>
<dbReference type="Pfam" id="PF00365">
    <property type="entry name" value="PFK"/>
    <property type="match status" value="1"/>
</dbReference>
<dbReference type="PIRSF" id="PIRSF000532">
    <property type="entry name" value="ATP_PFK_prok"/>
    <property type="match status" value="1"/>
</dbReference>
<dbReference type="PRINTS" id="PR00476">
    <property type="entry name" value="PHFRCTKINASE"/>
</dbReference>
<dbReference type="SUPFAM" id="SSF53784">
    <property type="entry name" value="Phosphofructokinase"/>
    <property type="match status" value="1"/>
</dbReference>
<dbReference type="PROSITE" id="PS00433">
    <property type="entry name" value="PHOSPHOFRUCTOKINASE"/>
    <property type="match status" value="1"/>
</dbReference>
<gene>
    <name evidence="1" type="primary">pfkA</name>
    <name type="ordered locus">BCQ_4403</name>
</gene>
<evidence type="ECO:0000255" key="1">
    <source>
        <dbReference type="HAMAP-Rule" id="MF_00339"/>
    </source>
</evidence>
<accession>B9J099</accession>
<sequence length="319" mass="34308">MKRIGVLTSGGDSPGMNAAIRAVVRKAIFHDIEVYGIYHGYAGLISGHIEKLELGSVGDIIHRGGTKLYTARCPEFKDPEVRLKGIEQLKKHGIEGLVVIGGDGSYQGAKKLTEQGFPCVGVPGTIDNDIPGTDFTIGFDTALNTVIDAIDKIRDTATSHERTYVIEVMGRHAGDIALWAGLADGAETILIPEEEYDMEDVIARLKRGSERGKKHSIIVVAEGVGSAIDIGKHIEEATNFDTRVTVLGHVQRGGSPSAQDRVLASRLGARAVELLIAGKGGRCVGIQDNKLVDHDIIEALAQKHTIDKDMYQLSKELSI</sequence>
<proteinExistence type="inferred from homology"/>
<comment type="function">
    <text evidence="1">Catalyzes the phosphorylation of D-fructose 6-phosphate to fructose 1,6-bisphosphate by ATP, the first committing step of glycolysis.</text>
</comment>
<comment type="catalytic activity">
    <reaction evidence="1">
        <text>beta-D-fructose 6-phosphate + ATP = beta-D-fructose 1,6-bisphosphate + ADP + H(+)</text>
        <dbReference type="Rhea" id="RHEA:16109"/>
        <dbReference type="ChEBI" id="CHEBI:15378"/>
        <dbReference type="ChEBI" id="CHEBI:30616"/>
        <dbReference type="ChEBI" id="CHEBI:32966"/>
        <dbReference type="ChEBI" id="CHEBI:57634"/>
        <dbReference type="ChEBI" id="CHEBI:456216"/>
        <dbReference type="EC" id="2.7.1.11"/>
    </reaction>
</comment>
<comment type="cofactor">
    <cofactor evidence="1">
        <name>Mg(2+)</name>
        <dbReference type="ChEBI" id="CHEBI:18420"/>
    </cofactor>
</comment>
<comment type="activity regulation">
    <text evidence="1">Allosterically activated by ADP and other diphosphonucleosides, and allosterically inhibited by phosphoenolpyruvate.</text>
</comment>
<comment type="pathway">
    <text evidence="1">Carbohydrate degradation; glycolysis; D-glyceraldehyde 3-phosphate and glycerone phosphate from D-glucose: step 3/4.</text>
</comment>
<comment type="subunit">
    <text evidence="1">Homotetramer.</text>
</comment>
<comment type="subcellular location">
    <subcellularLocation>
        <location evidence="1">Cytoplasm</location>
    </subcellularLocation>
</comment>
<comment type="similarity">
    <text evidence="1">Belongs to the phosphofructokinase type A (PFKA) family. ATP-dependent PFK group I subfamily. Prokaryotic clade 'B1' sub-subfamily.</text>
</comment>
<keyword id="KW-0021">Allosteric enzyme</keyword>
<keyword id="KW-0067">ATP-binding</keyword>
<keyword id="KW-0963">Cytoplasm</keyword>
<keyword id="KW-0324">Glycolysis</keyword>
<keyword id="KW-0418">Kinase</keyword>
<keyword id="KW-0460">Magnesium</keyword>
<keyword id="KW-0479">Metal-binding</keyword>
<keyword id="KW-0547">Nucleotide-binding</keyword>
<keyword id="KW-0808">Transferase</keyword>